<comment type="function">
    <text>May be involved in the initial formation of the chordamesoderm.</text>
</comment>
<comment type="subcellular location">
    <subcellularLocation>
        <location evidence="2">Nucleus</location>
    </subcellularLocation>
</comment>
<comment type="developmental stage">
    <text>First expressed in the early primitive streak. By stage 4, in Hensen node, early prechordal plate and notochord. Also expressed in early development in the neural plate ectoderm immediately anterior to Hensen node. Expression not detected after stage 10-12.</text>
</comment>
<keyword id="KW-0217">Developmental protein</keyword>
<keyword id="KW-0238">DNA-binding</keyword>
<keyword id="KW-0539">Nucleus</keyword>
<keyword id="KW-1185">Reference proteome</keyword>
<keyword id="KW-0804">Transcription</keyword>
<keyword id="KW-0805">Transcription regulation</keyword>
<gene>
    <name evidence="1" type="primary">TBX19</name>
</gene>
<feature type="chain" id="PRO_0000184463" description="T-box transcription factor TBX19">
    <location>
        <begin position="1"/>
        <end position="397"/>
    </location>
</feature>
<feature type="DNA-binding region" description="T-box" evidence="2">
    <location>
        <begin position="48"/>
        <end position="216"/>
    </location>
</feature>
<feature type="region of interest" description="Disordered" evidence="3">
    <location>
        <begin position="220"/>
        <end position="248"/>
    </location>
</feature>
<name>TBX19_CHICK</name>
<accession>P79778</accession>
<dbReference type="EMBL" id="U67087">
    <property type="protein sequence ID" value="AAC60072.1"/>
    <property type="molecule type" value="mRNA"/>
</dbReference>
<dbReference type="RefSeq" id="NP_990281.1">
    <property type="nucleotide sequence ID" value="NM_204950.1"/>
</dbReference>
<dbReference type="SMR" id="P79778"/>
<dbReference type="STRING" id="9031.ENSGALP00000024551"/>
<dbReference type="PaxDb" id="9031-ENSGALP00000024551"/>
<dbReference type="GeneID" id="395793"/>
<dbReference type="KEGG" id="gga:395793"/>
<dbReference type="CTD" id="9095"/>
<dbReference type="VEuPathDB" id="HostDB:geneid_395793"/>
<dbReference type="eggNOG" id="KOG3585">
    <property type="taxonomic scope" value="Eukaryota"/>
</dbReference>
<dbReference type="InParanoid" id="P79778"/>
<dbReference type="OrthoDB" id="7442607at2759"/>
<dbReference type="PhylomeDB" id="P79778"/>
<dbReference type="PRO" id="PR:P79778"/>
<dbReference type="Proteomes" id="UP000000539">
    <property type="component" value="Unassembled WGS sequence"/>
</dbReference>
<dbReference type="GO" id="GO:0000785">
    <property type="term" value="C:chromatin"/>
    <property type="evidence" value="ECO:0000318"/>
    <property type="project" value="GO_Central"/>
</dbReference>
<dbReference type="GO" id="GO:0005634">
    <property type="term" value="C:nucleus"/>
    <property type="evidence" value="ECO:0000318"/>
    <property type="project" value="GO_Central"/>
</dbReference>
<dbReference type="GO" id="GO:0000981">
    <property type="term" value="F:DNA-binding transcription factor activity, RNA polymerase II-specific"/>
    <property type="evidence" value="ECO:0000318"/>
    <property type="project" value="GO_Central"/>
</dbReference>
<dbReference type="GO" id="GO:0000978">
    <property type="term" value="F:RNA polymerase II cis-regulatory region sequence-specific DNA binding"/>
    <property type="evidence" value="ECO:0000318"/>
    <property type="project" value="GO_Central"/>
</dbReference>
<dbReference type="GO" id="GO:0001708">
    <property type="term" value="P:cell fate specification"/>
    <property type="evidence" value="ECO:0000318"/>
    <property type="project" value="GO_Central"/>
</dbReference>
<dbReference type="GO" id="GO:0003007">
    <property type="term" value="P:heart morphogenesis"/>
    <property type="evidence" value="ECO:0000318"/>
    <property type="project" value="GO_Central"/>
</dbReference>
<dbReference type="GO" id="GO:0001707">
    <property type="term" value="P:mesoderm formation"/>
    <property type="evidence" value="ECO:0000318"/>
    <property type="project" value="GO_Central"/>
</dbReference>
<dbReference type="GO" id="GO:0045893">
    <property type="term" value="P:positive regulation of DNA-templated transcription"/>
    <property type="evidence" value="ECO:0007669"/>
    <property type="project" value="InterPro"/>
</dbReference>
<dbReference type="GO" id="GO:0006357">
    <property type="term" value="P:regulation of transcription by RNA polymerase II"/>
    <property type="evidence" value="ECO:0000318"/>
    <property type="project" value="GO_Central"/>
</dbReference>
<dbReference type="CDD" id="cd20201">
    <property type="entry name" value="T-box_TBX19-like"/>
    <property type="match status" value="1"/>
</dbReference>
<dbReference type="FunFam" id="2.60.40.820:FF:000002">
    <property type="entry name" value="T-box transcription factor Brachyury"/>
    <property type="match status" value="1"/>
</dbReference>
<dbReference type="Gene3D" id="2.60.40.820">
    <property type="entry name" value="Transcription factor, T-box"/>
    <property type="match status" value="1"/>
</dbReference>
<dbReference type="InterPro" id="IPR008967">
    <property type="entry name" value="p53-like_TF_DNA-bd_sf"/>
</dbReference>
<dbReference type="InterPro" id="IPR046360">
    <property type="entry name" value="T-box_DNA-bd"/>
</dbReference>
<dbReference type="InterPro" id="IPR036960">
    <property type="entry name" value="T-box_sf"/>
</dbReference>
<dbReference type="InterPro" id="IPR002070">
    <property type="entry name" value="TF_Brachyury"/>
</dbReference>
<dbReference type="InterPro" id="IPR001699">
    <property type="entry name" value="TF_T-box"/>
</dbReference>
<dbReference type="InterPro" id="IPR018186">
    <property type="entry name" value="TF_T-box_CS"/>
</dbReference>
<dbReference type="PANTHER" id="PTHR11267">
    <property type="entry name" value="T-BOX PROTEIN-RELATED"/>
    <property type="match status" value="1"/>
</dbReference>
<dbReference type="PANTHER" id="PTHR11267:SF114">
    <property type="entry name" value="T-BOX TRANSCRIPTION FACTOR TBX19"/>
    <property type="match status" value="1"/>
</dbReference>
<dbReference type="Pfam" id="PF00907">
    <property type="entry name" value="T-box"/>
    <property type="match status" value="1"/>
</dbReference>
<dbReference type="PRINTS" id="PR00938">
    <property type="entry name" value="BRACHYURY"/>
</dbReference>
<dbReference type="PRINTS" id="PR00937">
    <property type="entry name" value="TBOX"/>
</dbReference>
<dbReference type="SMART" id="SM00425">
    <property type="entry name" value="TBOX"/>
    <property type="match status" value="1"/>
</dbReference>
<dbReference type="SUPFAM" id="SSF49417">
    <property type="entry name" value="p53-like transcription factors"/>
    <property type="match status" value="1"/>
</dbReference>
<dbReference type="PROSITE" id="PS01283">
    <property type="entry name" value="TBOX_1"/>
    <property type="match status" value="1"/>
</dbReference>
<dbReference type="PROSITE" id="PS01264">
    <property type="entry name" value="TBOX_2"/>
    <property type="match status" value="1"/>
</dbReference>
<dbReference type="PROSITE" id="PS50252">
    <property type="entry name" value="TBOX_3"/>
    <property type="match status" value="1"/>
</dbReference>
<protein>
    <recommendedName>
        <fullName evidence="4">T-box transcription factor TBX19</fullName>
    </recommendedName>
</protein>
<evidence type="ECO:0000250" key="1">
    <source>
        <dbReference type="UniProtKB" id="O60806"/>
    </source>
</evidence>
<evidence type="ECO:0000255" key="2">
    <source>
        <dbReference type="PROSITE-ProRule" id="PRU00201"/>
    </source>
</evidence>
<evidence type="ECO:0000256" key="3">
    <source>
        <dbReference type="SAM" id="MobiDB-lite"/>
    </source>
</evidence>
<evidence type="ECO:0000305" key="4"/>
<proteinExistence type="evidence at transcript level"/>
<organism>
    <name type="scientific">Gallus gallus</name>
    <name type="common">Chicken</name>
    <dbReference type="NCBI Taxonomy" id="9031"/>
    <lineage>
        <taxon>Eukaryota</taxon>
        <taxon>Metazoa</taxon>
        <taxon>Chordata</taxon>
        <taxon>Craniata</taxon>
        <taxon>Vertebrata</taxon>
        <taxon>Euteleostomi</taxon>
        <taxon>Archelosauria</taxon>
        <taxon>Archosauria</taxon>
        <taxon>Dinosauria</taxon>
        <taxon>Saurischia</taxon>
        <taxon>Theropoda</taxon>
        <taxon>Coelurosauria</taxon>
        <taxon>Aves</taxon>
        <taxon>Neognathae</taxon>
        <taxon>Galloanserae</taxon>
        <taxon>Galliformes</taxon>
        <taxon>Phasianidae</taxon>
        <taxon>Phasianinae</taxon>
        <taxon>Gallus</taxon>
    </lineage>
</organism>
<sequence length="397" mass="43686">MADLGCKKPSDCTVSRLLSVVESELRAGRDKGDPTEKQLQVVLEDAPLWQRFREVTNEMIVTKNGRRMFPVLKISVSGLDPNAMYSFLLDFAPTDGHRWKYVNGEWVPAGKPEPPNHSCVYIHPDSPNFGAHWMKAAISFSKVKLTNKLNGSGQIMLNSLHKYEPQVHIVRVGGPHRMVMNCSFPETQFIAVTAYQNEEITALKIKYNPFAKAFLDAKERNHPKDAPEAASEGQHMTYSHSPQAPHGCERYSALRGHRAAPYPPSYMQRNHSPTVNFFESSSNNLQVFSGHDSWTLPSSPHANLLSVPHTKGATSPGPSHYPCLWPVSNSAVSVTNPGSEVNSNTSSMFLRGNVPLPTASSSVQIPLQATVSGGMETQGEAPLVRLADSAWTSSHSF</sequence>
<reference key="1">
    <citation type="journal article" date="1997" name="Development">
        <title>Two novel chick T-box genes related to mouse Brachyury are expressed in different, non-overlapping mesodermal domains during gastrulation.</title>
        <authorList>
            <person name="Knezevic V."/>
            <person name="de Santo R."/>
            <person name="Mackem S."/>
        </authorList>
    </citation>
    <scope>NUCLEOTIDE SEQUENCE [MRNA]</scope>
    <source>
        <strain>White leghorn</strain>
        <tissue>Embryo</tissue>
    </source>
</reference>